<comment type="subcellular location">
    <subcellularLocation>
        <location evidence="1">Cytoplasm</location>
        <location evidence="1">Nucleoid</location>
    </subcellularLocation>
</comment>
<comment type="similarity">
    <text evidence="1">Belongs to the YejK family.</text>
</comment>
<organism>
    <name type="scientific">Metapseudomonas resinovorans</name>
    <name type="common">Pseudomonas resinovorans</name>
    <dbReference type="NCBI Taxonomy" id="53412"/>
    <lineage>
        <taxon>Bacteria</taxon>
        <taxon>Pseudomonadati</taxon>
        <taxon>Pseudomonadota</taxon>
        <taxon>Gammaproteobacteria</taxon>
        <taxon>Pseudomonadales</taxon>
        <taxon>Pseudomonadaceae</taxon>
        <taxon>Metapseudomonas</taxon>
    </lineage>
</organism>
<keyword id="KW-0963">Cytoplasm</keyword>
<keyword id="KW-0614">Plasmid</keyword>
<reference key="1">
    <citation type="journal article" date="2003" name="J. Mol. Biol.">
        <title>Complete nucleotide sequence of carbazole/dioxin-degrading plasmid pCAR1 in Pseudomonas resinovorans strain CA10 indicates its mosaicity and the presence of large catabolic transposon Tn4676.</title>
        <authorList>
            <person name="Maeda K."/>
            <person name="Nojiri H."/>
            <person name="Shintani M."/>
            <person name="Yoshida T."/>
            <person name="Habe H."/>
            <person name="Omori T."/>
        </authorList>
    </citation>
    <scope>NUCLEOTIDE SEQUENCE [GENOMIC DNA]</scope>
    <source>
        <strain>CA10</strain>
    </source>
</reference>
<accession>Q8GHV6</accession>
<sequence>MPIRHIIVHQIDKKPDGTPAVLHARDTELGASQAIENMLADLNESYNAKQGKAWGLFHGESGAYPFSRWLKDYLDENQDFTAFSRHAVEHLQKLMEESNLSTGGHVLFAHYQQGMTDYLTVALLHHSEGVAVNDTLDVTPAKHLDLGQLHLAARINISEWQNNKQSKQYISFIKGKNGRKVSDYFRDFIGCQEGVDAPGETRTLLKAFSDFVESEDLPEEQAREKTNTLVGYATSQAKLGEPMTLEELSGLIDEDRPKAFYDHIRNRDYGLSPEIPADKRTLNQFRRFTGRAEGLSISFEAHLLGSKIDYDENAGTLTIRNLPTQLRDQLKRG</sequence>
<proteinExistence type="inferred from homology"/>
<name>NDPA_METRE</name>
<dbReference type="EMBL" id="AB088420">
    <property type="protein sequence ID" value="BAC41613.1"/>
    <property type="molecule type" value="Genomic_DNA"/>
</dbReference>
<dbReference type="RefSeq" id="NP_758635.1">
    <property type="nucleotide sequence ID" value="NC_004444.1"/>
</dbReference>
<dbReference type="RefSeq" id="WP_011077947.1">
    <property type="nucleotide sequence ID" value="NC_004444.1"/>
</dbReference>
<dbReference type="SMR" id="Q8GHV6"/>
<dbReference type="GO" id="GO:0043590">
    <property type="term" value="C:bacterial nucleoid"/>
    <property type="evidence" value="ECO:0007669"/>
    <property type="project" value="TreeGrafter"/>
</dbReference>
<dbReference type="GO" id="GO:0005737">
    <property type="term" value="C:cytoplasm"/>
    <property type="evidence" value="ECO:0007669"/>
    <property type="project" value="UniProtKB-UniRule"/>
</dbReference>
<dbReference type="GO" id="GO:0003690">
    <property type="term" value="F:double-stranded DNA binding"/>
    <property type="evidence" value="ECO:0007669"/>
    <property type="project" value="TreeGrafter"/>
</dbReference>
<dbReference type="GO" id="GO:0003727">
    <property type="term" value="F:single-stranded RNA binding"/>
    <property type="evidence" value="ECO:0007669"/>
    <property type="project" value="TreeGrafter"/>
</dbReference>
<dbReference type="HAMAP" id="MF_00730">
    <property type="entry name" value="NdpA"/>
    <property type="match status" value="1"/>
</dbReference>
<dbReference type="InterPro" id="IPR007358">
    <property type="entry name" value="Nucleoid_associated_NdpA"/>
</dbReference>
<dbReference type="NCBIfam" id="NF001557">
    <property type="entry name" value="PRK00378.1"/>
    <property type="match status" value="1"/>
</dbReference>
<dbReference type="PANTHER" id="PTHR38772">
    <property type="match status" value="1"/>
</dbReference>
<dbReference type="PANTHER" id="PTHR38772:SF1">
    <property type="entry name" value="NUCLEOID-ASSOCIATED PROTEIN YEJK"/>
    <property type="match status" value="1"/>
</dbReference>
<dbReference type="Pfam" id="PF04245">
    <property type="entry name" value="NA37"/>
    <property type="match status" value="1"/>
</dbReference>
<feature type="chain" id="PRO_0000210915" description="Nucleoid-associated protein">
    <location>
        <begin position="1"/>
        <end position="333"/>
    </location>
</feature>
<evidence type="ECO:0000255" key="1">
    <source>
        <dbReference type="HAMAP-Rule" id="MF_00730"/>
    </source>
</evidence>
<protein>
    <recommendedName>
        <fullName evidence="1">Nucleoid-associated protein</fullName>
    </recommendedName>
</protein>
<geneLocation type="plasmid">
    <name>pCAR1</name>
</geneLocation>